<sequence>MLEKLAEAHPVWKEEEFGDKDAEDYIISYSMYNGSWLVWEKDGMPVAVSYHLEWSPSNGKPWLGTVLIDPAEEKKGHAKMIIEQISKLLRAKHKAMFAGVPIERREWILFLSQCGFEQLKTEKDEKGKSFMILVKPLAEAAV</sequence>
<keyword id="KW-1185">Reference proteome</keyword>
<name>YKZC_BACSU</name>
<gene>
    <name type="primary">ykzC</name>
    <name type="ordered locus">BSU14680</name>
</gene>
<accession>O31720</accession>
<proteinExistence type="predicted"/>
<organism>
    <name type="scientific">Bacillus subtilis (strain 168)</name>
    <dbReference type="NCBI Taxonomy" id="224308"/>
    <lineage>
        <taxon>Bacteria</taxon>
        <taxon>Bacillati</taxon>
        <taxon>Bacillota</taxon>
        <taxon>Bacilli</taxon>
        <taxon>Bacillales</taxon>
        <taxon>Bacillaceae</taxon>
        <taxon>Bacillus</taxon>
    </lineage>
</organism>
<protein>
    <recommendedName>
        <fullName>Uncharacterized protein YkzC</fullName>
    </recommendedName>
</protein>
<evidence type="ECO:0000255" key="1">
    <source>
        <dbReference type="PROSITE-ProRule" id="PRU00532"/>
    </source>
</evidence>
<dbReference type="EMBL" id="AL009126">
    <property type="protein sequence ID" value="CAB13341.1"/>
    <property type="molecule type" value="Genomic_DNA"/>
</dbReference>
<dbReference type="PIR" id="H69870">
    <property type="entry name" value="H69870"/>
</dbReference>
<dbReference type="RefSeq" id="NP_389351.1">
    <property type="nucleotide sequence ID" value="NC_000964.3"/>
</dbReference>
<dbReference type="RefSeq" id="WP_003232296.1">
    <property type="nucleotide sequence ID" value="NZ_OZ025638.1"/>
</dbReference>
<dbReference type="SMR" id="O31720"/>
<dbReference type="FunCoup" id="O31720">
    <property type="interactions" value="32"/>
</dbReference>
<dbReference type="STRING" id="224308.BSU14680"/>
<dbReference type="PaxDb" id="224308-BSU14680"/>
<dbReference type="EnsemblBacteria" id="CAB13341">
    <property type="protein sequence ID" value="CAB13341"/>
    <property type="gene ID" value="BSU_14680"/>
</dbReference>
<dbReference type="GeneID" id="935976"/>
<dbReference type="KEGG" id="bsu:BSU14680"/>
<dbReference type="PATRIC" id="fig|224308.43.peg.1557"/>
<dbReference type="eggNOG" id="ENOG50346N3">
    <property type="taxonomic scope" value="Bacteria"/>
</dbReference>
<dbReference type="InParanoid" id="O31720"/>
<dbReference type="OrthoDB" id="2934055at2"/>
<dbReference type="BioCyc" id="BSUB:BSU14680-MONOMER"/>
<dbReference type="Proteomes" id="UP000001570">
    <property type="component" value="Chromosome"/>
</dbReference>
<dbReference type="GO" id="GO:0016747">
    <property type="term" value="F:acyltransferase activity, transferring groups other than amino-acyl groups"/>
    <property type="evidence" value="ECO:0007669"/>
    <property type="project" value="InterPro"/>
</dbReference>
<dbReference type="Gene3D" id="3.40.630.30">
    <property type="match status" value="1"/>
</dbReference>
<dbReference type="InterPro" id="IPR016181">
    <property type="entry name" value="Acyl_CoA_acyltransferase"/>
</dbReference>
<dbReference type="InterPro" id="IPR000182">
    <property type="entry name" value="GNAT_dom"/>
</dbReference>
<dbReference type="Pfam" id="PF00583">
    <property type="entry name" value="Acetyltransf_1"/>
    <property type="match status" value="1"/>
</dbReference>
<dbReference type="SUPFAM" id="SSF55729">
    <property type="entry name" value="Acyl-CoA N-acyltransferases (Nat)"/>
    <property type="match status" value="1"/>
</dbReference>
<dbReference type="PROSITE" id="PS51186">
    <property type="entry name" value="GNAT"/>
    <property type="match status" value="1"/>
</dbReference>
<feature type="chain" id="PRO_0000049615" description="Uncharacterized protein YkzC">
    <location>
        <begin position="1"/>
        <end position="142"/>
    </location>
</feature>
<feature type="domain" description="N-acetyltransferase" evidence="1">
    <location>
        <begin position="1"/>
        <end position="138"/>
    </location>
</feature>
<reference key="1">
    <citation type="journal article" date="1997" name="Nature">
        <title>The complete genome sequence of the Gram-positive bacterium Bacillus subtilis.</title>
        <authorList>
            <person name="Kunst F."/>
            <person name="Ogasawara N."/>
            <person name="Moszer I."/>
            <person name="Albertini A.M."/>
            <person name="Alloni G."/>
            <person name="Azevedo V."/>
            <person name="Bertero M.G."/>
            <person name="Bessieres P."/>
            <person name="Bolotin A."/>
            <person name="Borchert S."/>
            <person name="Borriss R."/>
            <person name="Boursier L."/>
            <person name="Brans A."/>
            <person name="Braun M."/>
            <person name="Brignell S.C."/>
            <person name="Bron S."/>
            <person name="Brouillet S."/>
            <person name="Bruschi C.V."/>
            <person name="Caldwell B."/>
            <person name="Capuano V."/>
            <person name="Carter N.M."/>
            <person name="Choi S.-K."/>
            <person name="Codani J.-J."/>
            <person name="Connerton I.F."/>
            <person name="Cummings N.J."/>
            <person name="Daniel R.A."/>
            <person name="Denizot F."/>
            <person name="Devine K.M."/>
            <person name="Duesterhoeft A."/>
            <person name="Ehrlich S.D."/>
            <person name="Emmerson P.T."/>
            <person name="Entian K.-D."/>
            <person name="Errington J."/>
            <person name="Fabret C."/>
            <person name="Ferrari E."/>
            <person name="Foulger D."/>
            <person name="Fritz C."/>
            <person name="Fujita M."/>
            <person name="Fujita Y."/>
            <person name="Fuma S."/>
            <person name="Galizzi A."/>
            <person name="Galleron N."/>
            <person name="Ghim S.-Y."/>
            <person name="Glaser P."/>
            <person name="Goffeau A."/>
            <person name="Golightly E.J."/>
            <person name="Grandi G."/>
            <person name="Guiseppi G."/>
            <person name="Guy B.J."/>
            <person name="Haga K."/>
            <person name="Haiech J."/>
            <person name="Harwood C.R."/>
            <person name="Henaut A."/>
            <person name="Hilbert H."/>
            <person name="Holsappel S."/>
            <person name="Hosono S."/>
            <person name="Hullo M.-F."/>
            <person name="Itaya M."/>
            <person name="Jones L.-M."/>
            <person name="Joris B."/>
            <person name="Karamata D."/>
            <person name="Kasahara Y."/>
            <person name="Klaerr-Blanchard M."/>
            <person name="Klein C."/>
            <person name="Kobayashi Y."/>
            <person name="Koetter P."/>
            <person name="Koningstein G."/>
            <person name="Krogh S."/>
            <person name="Kumano M."/>
            <person name="Kurita K."/>
            <person name="Lapidus A."/>
            <person name="Lardinois S."/>
            <person name="Lauber J."/>
            <person name="Lazarevic V."/>
            <person name="Lee S.-M."/>
            <person name="Levine A."/>
            <person name="Liu H."/>
            <person name="Masuda S."/>
            <person name="Mauel C."/>
            <person name="Medigue C."/>
            <person name="Medina N."/>
            <person name="Mellado R.P."/>
            <person name="Mizuno M."/>
            <person name="Moestl D."/>
            <person name="Nakai S."/>
            <person name="Noback M."/>
            <person name="Noone D."/>
            <person name="O'Reilly M."/>
            <person name="Ogawa K."/>
            <person name="Ogiwara A."/>
            <person name="Oudega B."/>
            <person name="Park S.-H."/>
            <person name="Parro V."/>
            <person name="Pohl T.M."/>
            <person name="Portetelle D."/>
            <person name="Porwollik S."/>
            <person name="Prescott A.M."/>
            <person name="Presecan E."/>
            <person name="Pujic P."/>
            <person name="Purnelle B."/>
            <person name="Rapoport G."/>
            <person name="Rey M."/>
            <person name="Reynolds S."/>
            <person name="Rieger M."/>
            <person name="Rivolta C."/>
            <person name="Rocha E."/>
            <person name="Roche B."/>
            <person name="Rose M."/>
            <person name="Sadaie Y."/>
            <person name="Sato T."/>
            <person name="Scanlan E."/>
            <person name="Schleich S."/>
            <person name="Schroeter R."/>
            <person name="Scoffone F."/>
            <person name="Sekiguchi J."/>
            <person name="Sekowska A."/>
            <person name="Seror S.J."/>
            <person name="Serror P."/>
            <person name="Shin B.-S."/>
            <person name="Soldo B."/>
            <person name="Sorokin A."/>
            <person name="Tacconi E."/>
            <person name="Takagi T."/>
            <person name="Takahashi H."/>
            <person name="Takemaru K."/>
            <person name="Takeuchi M."/>
            <person name="Tamakoshi A."/>
            <person name="Tanaka T."/>
            <person name="Terpstra P."/>
            <person name="Tognoni A."/>
            <person name="Tosato V."/>
            <person name="Uchiyama S."/>
            <person name="Vandenbol M."/>
            <person name="Vannier F."/>
            <person name="Vassarotti A."/>
            <person name="Viari A."/>
            <person name="Wambutt R."/>
            <person name="Wedler E."/>
            <person name="Wedler H."/>
            <person name="Weitzenegger T."/>
            <person name="Winters P."/>
            <person name="Wipat A."/>
            <person name="Yamamoto H."/>
            <person name="Yamane K."/>
            <person name="Yasumoto K."/>
            <person name="Yata K."/>
            <person name="Yoshida K."/>
            <person name="Yoshikawa H.-F."/>
            <person name="Zumstein E."/>
            <person name="Yoshikawa H."/>
            <person name="Danchin A."/>
        </authorList>
    </citation>
    <scope>NUCLEOTIDE SEQUENCE [LARGE SCALE GENOMIC DNA]</scope>
    <source>
        <strain>168</strain>
    </source>
</reference>